<reference key="1">
    <citation type="journal article" date="2008" name="BMC Genomics">
        <title>Genome sequence and rapid evolution of the rice pathogen Xanthomonas oryzae pv. oryzae PXO99A.</title>
        <authorList>
            <person name="Salzberg S.L."/>
            <person name="Sommer D.D."/>
            <person name="Schatz M.C."/>
            <person name="Phillippy A.M."/>
            <person name="Rabinowicz P.D."/>
            <person name="Tsuge S."/>
            <person name="Furutani A."/>
            <person name="Ochiai H."/>
            <person name="Delcher A.L."/>
            <person name="Kelley D."/>
            <person name="Madupu R."/>
            <person name="Puiu D."/>
            <person name="Radune D."/>
            <person name="Shumway M."/>
            <person name="Trapnell C."/>
            <person name="Aparna G."/>
            <person name="Jha G."/>
            <person name="Pandey A."/>
            <person name="Patil P.B."/>
            <person name="Ishihara H."/>
            <person name="Meyer D.F."/>
            <person name="Szurek B."/>
            <person name="Verdier V."/>
            <person name="Koebnik R."/>
            <person name="Dow J.M."/>
            <person name="Ryan R.P."/>
            <person name="Hirata H."/>
            <person name="Tsuyumu S."/>
            <person name="Won Lee S."/>
            <person name="Seo Y.-S."/>
            <person name="Sriariyanum M."/>
            <person name="Ronald P.C."/>
            <person name="Sonti R.V."/>
            <person name="Van Sluys M.-A."/>
            <person name="Leach J.E."/>
            <person name="White F.F."/>
            <person name="Bogdanove A.J."/>
        </authorList>
    </citation>
    <scope>NUCLEOTIDE SEQUENCE [LARGE SCALE GENOMIC DNA]</scope>
    <source>
        <strain>PXO99A</strain>
    </source>
</reference>
<accession>B2SQP2</accession>
<gene>
    <name evidence="1" type="primary">pth</name>
    <name type="ordered locus">PXO_04540</name>
</gene>
<comment type="function">
    <text evidence="1">Hydrolyzes ribosome-free peptidyl-tRNAs (with 1 or more amino acids incorporated), which drop off the ribosome during protein synthesis, or as a result of ribosome stalling.</text>
</comment>
<comment type="function">
    <text evidence="1">Catalyzes the release of premature peptidyl moieties from peptidyl-tRNA molecules trapped in stalled 50S ribosomal subunits, and thus maintains levels of free tRNAs and 50S ribosomes.</text>
</comment>
<comment type="catalytic activity">
    <reaction evidence="1">
        <text>an N-acyl-L-alpha-aminoacyl-tRNA + H2O = an N-acyl-L-amino acid + a tRNA + H(+)</text>
        <dbReference type="Rhea" id="RHEA:54448"/>
        <dbReference type="Rhea" id="RHEA-COMP:10123"/>
        <dbReference type="Rhea" id="RHEA-COMP:13883"/>
        <dbReference type="ChEBI" id="CHEBI:15377"/>
        <dbReference type="ChEBI" id="CHEBI:15378"/>
        <dbReference type="ChEBI" id="CHEBI:59874"/>
        <dbReference type="ChEBI" id="CHEBI:78442"/>
        <dbReference type="ChEBI" id="CHEBI:138191"/>
        <dbReference type="EC" id="3.1.1.29"/>
    </reaction>
</comment>
<comment type="subunit">
    <text evidence="1">Monomer.</text>
</comment>
<comment type="subcellular location">
    <subcellularLocation>
        <location evidence="1">Cytoplasm</location>
    </subcellularLocation>
</comment>
<comment type="similarity">
    <text evidence="1">Belongs to the PTH family.</text>
</comment>
<sequence length="194" mass="21038">MSALRLIVGLGNPGQEHAQTRHNAGFRFVDSLIERSGARWALDSKLFGETAKVDIAGQPVWLLKPATFMNLSGKSITAALRFWKIEPEHLLVAHDELDLAPGTARLKFDGGHGGQNGLRDTIGLLGHGKFHRLRVGIGHPGHKDRVVPWVLGRAGREDDAAIGTAIDAAIDVLPLAMEGHFSEAMKRLHTSRDA</sequence>
<protein>
    <recommendedName>
        <fullName evidence="1">Peptidyl-tRNA hydrolase</fullName>
        <shortName evidence="1">Pth</shortName>
        <ecNumber evidence="1">3.1.1.29</ecNumber>
    </recommendedName>
</protein>
<dbReference type="EC" id="3.1.1.29" evidence="1"/>
<dbReference type="EMBL" id="CP000967">
    <property type="protein sequence ID" value="ACD57869.1"/>
    <property type="molecule type" value="Genomic_DNA"/>
</dbReference>
<dbReference type="RefSeq" id="WP_011260042.1">
    <property type="nucleotide sequence ID" value="NC_010717.2"/>
</dbReference>
<dbReference type="SMR" id="B2SQP2"/>
<dbReference type="KEGG" id="xop:PXO_04540"/>
<dbReference type="eggNOG" id="COG0193">
    <property type="taxonomic scope" value="Bacteria"/>
</dbReference>
<dbReference type="HOGENOM" id="CLU_062456_3_1_6"/>
<dbReference type="Proteomes" id="UP000001740">
    <property type="component" value="Chromosome"/>
</dbReference>
<dbReference type="GO" id="GO:0005737">
    <property type="term" value="C:cytoplasm"/>
    <property type="evidence" value="ECO:0007669"/>
    <property type="project" value="UniProtKB-SubCell"/>
</dbReference>
<dbReference type="GO" id="GO:0004045">
    <property type="term" value="F:peptidyl-tRNA hydrolase activity"/>
    <property type="evidence" value="ECO:0007669"/>
    <property type="project" value="UniProtKB-UniRule"/>
</dbReference>
<dbReference type="GO" id="GO:0000049">
    <property type="term" value="F:tRNA binding"/>
    <property type="evidence" value="ECO:0007669"/>
    <property type="project" value="UniProtKB-UniRule"/>
</dbReference>
<dbReference type="GO" id="GO:0006515">
    <property type="term" value="P:protein quality control for misfolded or incompletely synthesized proteins"/>
    <property type="evidence" value="ECO:0007669"/>
    <property type="project" value="UniProtKB-UniRule"/>
</dbReference>
<dbReference type="GO" id="GO:0072344">
    <property type="term" value="P:rescue of stalled ribosome"/>
    <property type="evidence" value="ECO:0007669"/>
    <property type="project" value="UniProtKB-UniRule"/>
</dbReference>
<dbReference type="CDD" id="cd00462">
    <property type="entry name" value="PTH"/>
    <property type="match status" value="1"/>
</dbReference>
<dbReference type="FunFam" id="3.40.50.1470:FF:000001">
    <property type="entry name" value="Peptidyl-tRNA hydrolase"/>
    <property type="match status" value="1"/>
</dbReference>
<dbReference type="Gene3D" id="3.40.50.1470">
    <property type="entry name" value="Peptidyl-tRNA hydrolase"/>
    <property type="match status" value="1"/>
</dbReference>
<dbReference type="HAMAP" id="MF_00083">
    <property type="entry name" value="Pept_tRNA_hydro_bact"/>
    <property type="match status" value="1"/>
</dbReference>
<dbReference type="InterPro" id="IPR001328">
    <property type="entry name" value="Pept_tRNA_hydro"/>
</dbReference>
<dbReference type="InterPro" id="IPR018171">
    <property type="entry name" value="Pept_tRNA_hydro_CS"/>
</dbReference>
<dbReference type="InterPro" id="IPR036416">
    <property type="entry name" value="Pept_tRNA_hydro_sf"/>
</dbReference>
<dbReference type="NCBIfam" id="TIGR00447">
    <property type="entry name" value="pth"/>
    <property type="match status" value="1"/>
</dbReference>
<dbReference type="PANTHER" id="PTHR17224">
    <property type="entry name" value="PEPTIDYL-TRNA HYDROLASE"/>
    <property type="match status" value="1"/>
</dbReference>
<dbReference type="PANTHER" id="PTHR17224:SF1">
    <property type="entry name" value="PEPTIDYL-TRNA HYDROLASE"/>
    <property type="match status" value="1"/>
</dbReference>
<dbReference type="Pfam" id="PF01195">
    <property type="entry name" value="Pept_tRNA_hydro"/>
    <property type="match status" value="1"/>
</dbReference>
<dbReference type="SUPFAM" id="SSF53178">
    <property type="entry name" value="Peptidyl-tRNA hydrolase-like"/>
    <property type="match status" value="1"/>
</dbReference>
<dbReference type="PROSITE" id="PS01195">
    <property type="entry name" value="PEPT_TRNA_HYDROL_1"/>
    <property type="match status" value="1"/>
</dbReference>
<evidence type="ECO:0000255" key="1">
    <source>
        <dbReference type="HAMAP-Rule" id="MF_00083"/>
    </source>
</evidence>
<proteinExistence type="inferred from homology"/>
<organism>
    <name type="scientific">Xanthomonas oryzae pv. oryzae (strain PXO99A)</name>
    <dbReference type="NCBI Taxonomy" id="360094"/>
    <lineage>
        <taxon>Bacteria</taxon>
        <taxon>Pseudomonadati</taxon>
        <taxon>Pseudomonadota</taxon>
        <taxon>Gammaproteobacteria</taxon>
        <taxon>Lysobacterales</taxon>
        <taxon>Lysobacteraceae</taxon>
        <taxon>Xanthomonas</taxon>
    </lineage>
</organism>
<keyword id="KW-0963">Cytoplasm</keyword>
<keyword id="KW-0378">Hydrolase</keyword>
<keyword id="KW-0694">RNA-binding</keyword>
<keyword id="KW-0820">tRNA-binding</keyword>
<feature type="chain" id="PRO_1000093002" description="Peptidyl-tRNA hydrolase">
    <location>
        <begin position="1"/>
        <end position="194"/>
    </location>
</feature>
<feature type="active site" description="Proton acceptor" evidence="1">
    <location>
        <position position="22"/>
    </location>
</feature>
<feature type="binding site" evidence="1">
    <location>
        <position position="17"/>
    </location>
    <ligand>
        <name>tRNA</name>
        <dbReference type="ChEBI" id="CHEBI:17843"/>
    </ligand>
</feature>
<feature type="binding site" evidence="1">
    <location>
        <position position="68"/>
    </location>
    <ligand>
        <name>tRNA</name>
        <dbReference type="ChEBI" id="CHEBI:17843"/>
    </ligand>
</feature>
<feature type="binding site" evidence="1">
    <location>
        <position position="70"/>
    </location>
    <ligand>
        <name>tRNA</name>
        <dbReference type="ChEBI" id="CHEBI:17843"/>
    </ligand>
</feature>
<feature type="binding site" evidence="1">
    <location>
        <position position="116"/>
    </location>
    <ligand>
        <name>tRNA</name>
        <dbReference type="ChEBI" id="CHEBI:17843"/>
    </ligand>
</feature>
<feature type="site" description="Discriminates between blocked and unblocked aminoacyl-tRNA" evidence="1">
    <location>
        <position position="12"/>
    </location>
</feature>
<feature type="site" description="Stabilizes the basic form of H active site to accept a proton" evidence="1">
    <location>
        <position position="95"/>
    </location>
</feature>
<name>PTH_XANOP</name>